<dbReference type="EC" id="2.7.7.23" evidence="1"/>
<dbReference type="EC" id="2.3.1.157" evidence="1"/>
<dbReference type="EMBL" id="CP000462">
    <property type="protein sequence ID" value="ABK38010.1"/>
    <property type="molecule type" value="Genomic_DNA"/>
</dbReference>
<dbReference type="RefSeq" id="WP_011707907.1">
    <property type="nucleotide sequence ID" value="NC_008570.1"/>
</dbReference>
<dbReference type="RefSeq" id="YP_858677.1">
    <property type="nucleotide sequence ID" value="NC_008570.1"/>
</dbReference>
<dbReference type="SMR" id="A0KQX6"/>
<dbReference type="STRING" id="380703.AHA_4260"/>
<dbReference type="EnsemblBacteria" id="ABK38010">
    <property type="protein sequence ID" value="ABK38010"/>
    <property type="gene ID" value="AHA_4260"/>
</dbReference>
<dbReference type="GeneID" id="4487364"/>
<dbReference type="KEGG" id="aha:AHA_4260"/>
<dbReference type="PATRIC" id="fig|380703.7.peg.4210"/>
<dbReference type="eggNOG" id="COG1207">
    <property type="taxonomic scope" value="Bacteria"/>
</dbReference>
<dbReference type="HOGENOM" id="CLU_029499_15_2_6"/>
<dbReference type="OrthoDB" id="9775031at2"/>
<dbReference type="UniPathway" id="UPA00113">
    <property type="reaction ID" value="UER00532"/>
</dbReference>
<dbReference type="UniPathway" id="UPA00113">
    <property type="reaction ID" value="UER00533"/>
</dbReference>
<dbReference type="UniPathway" id="UPA00973"/>
<dbReference type="Proteomes" id="UP000000756">
    <property type="component" value="Chromosome"/>
</dbReference>
<dbReference type="GO" id="GO:0005737">
    <property type="term" value="C:cytoplasm"/>
    <property type="evidence" value="ECO:0007669"/>
    <property type="project" value="UniProtKB-SubCell"/>
</dbReference>
<dbReference type="GO" id="GO:0016020">
    <property type="term" value="C:membrane"/>
    <property type="evidence" value="ECO:0007669"/>
    <property type="project" value="GOC"/>
</dbReference>
<dbReference type="GO" id="GO:0019134">
    <property type="term" value="F:glucosamine-1-phosphate N-acetyltransferase activity"/>
    <property type="evidence" value="ECO:0007669"/>
    <property type="project" value="UniProtKB-UniRule"/>
</dbReference>
<dbReference type="GO" id="GO:0000287">
    <property type="term" value="F:magnesium ion binding"/>
    <property type="evidence" value="ECO:0007669"/>
    <property type="project" value="UniProtKB-UniRule"/>
</dbReference>
<dbReference type="GO" id="GO:0003977">
    <property type="term" value="F:UDP-N-acetylglucosamine diphosphorylase activity"/>
    <property type="evidence" value="ECO:0007669"/>
    <property type="project" value="UniProtKB-UniRule"/>
</dbReference>
<dbReference type="GO" id="GO:0000902">
    <property type="term" value="P:cell morphogenesis"/>
    <property type="evidence" value="ECO:0007669"/>
    <property type="project" value="UniProtKB-UniRule"/>
</dbReference>
<dbReference type="GO" id="GO:0071555">
    <property type="term" value="P:cell wall organization"/>
    <property type="evidence" value="ECO:0007669"/>
    <property type="project" value="UniProtKB-KW"/>
</dbReference>
<dbReference type="GO" id="GO:0009245">
    <property type="term" value="P:lipid A biosynthetic process"/>
    <property type="evidence" value="ECO:0007669"/>
    <property type="project" value="UniProtKB-UniRule"/>
</dbReference>
<dbReference type="GO" id="GO:0009252">
    <property type="term" value="P:peptidoglycan biosynthetic process"/>
    <property type="evidence" value="ECO:0007669"/>
    <property type="project" value="UniProtKB-UniRule"/>
</dbReference>
<dbReference type="GO" id="GO:0008360">
    <property type="term" value="P:regulation of cell shape"/>
    <property type="evidence" value="ECO:0007669"/>
    <property type="project" value="UniProtKB-KW"/>
</dbReference>
<dbReference type="GO" id="GO:0006048">
    <property type="term" value="P:UDP-N-acetylglucosamine biosynthetic process"/>
    <property type="evidence" value="ECO:0007669"/>
    <property type="project" value="UniProtKB-UniPathway"/>
</dbReference>
<dbReference type="CDD" id="cd02540">
    <property type="entry name" value="GT2_GlmU_N_bac"/>
    <property type="match status" value="1"/>
</dbReference>
<dbReference type="CDD" id="cd03353">
    <property type="entry name" value="LbH_GlmU_C"/>
    <property type="match status" value="1"/>
</dbReference>
<dbReference type="FunFam" id="3.90.550.10:FF:000006">
    <property type="entry name" value="Bifunctional protein GlmU"/>
    <property type="match status" value="1"/>
</dbReference>
<dbReference type="Gene3D" id="2.160.10.10">
    <property type="entry name" value="Hexapeptide repeat proteins"/>
    <property type="match status" value="1"/>
</dbReference>
<dbReference type="Gene3D" id="3.90.550.10">
    <property type="entry name" value="Spore Coat Polysaccharide Biosynthesis Protein SpsA, Chain A"/>
    <property type="match status" value="1"/>
</dbReference>
<dbReference type="HAMAP" id="MF_01631">
    <property type="entry name" value="GlmU"/>
    <property type="match status" value="1"/>
</dbReference>
<dbReference type="InterPro" id="IPR005882">
    <property type="entry name" value="Bifunctional_GlmU"/>
</dbReference>
<dbReference type="InterPro" id="IPR050065">
    <property type="entry name" value="GlmU-like"/>
</dbReference>
<dbReference type="InterPro" id="IPR038009">
    <property type="entry name" value="GlmU_C_LbH"/>
</dbReference>
<dbReference type="InterPro" id="IPR001451">
    <property type="entry name" value="Hexapep"/>
</dbReference>
<dbReference type="InterPro" id="IPR018357">
    <property type="entry name" value="Hexapep_transf_CS"/>
</dbReference>
<dbReference type="InterPro" id="IPR025877">
    <property type="entry name" value="MobA-like_NTP_Trfase"/>
</dbReference>
<dbReference type="InterPro" id="IPR029044">
    <property type="entry name" value="Nucleotide-diphossugar_trans"/>
</dbReference>
<dbReference type="InterPro" id="IPR011004">
    <property type="entry name" value="Trimer_LpxA-like_sf"/>
</dbReference>
<dbReference type="NCBIfam" id="TIGR01173">
    <property type="entry name" value="glmU"/>
    <property type="match status" value="1"/>
</dbReference>
<dbReference type="NCBIfam" id="NF006986">
    <property type="entry name" value="PRK09451.1"/>
    <property type="match status" value="1"/>
</dbReference>
<dbReference type="PANTHER" id="PTHR43584:SF3">
    <property type="entry name" value="BIFUNCTIONAL PROTEIN GLMU"/>
    <property type="match status" value="1"/>
</dbReference>
<dbReference type="PANTHER" id="PTHR43584">
    <property type="entry name" value="NUCLEOTIDYL TRANSFERASE"/>
    <property type="match status" value="1"/>
</dbReference>
<dbReference type="Pfam" id="PF00132">
    <property type="entry name" value="Hexapep"/>
    <property type="match status" value="2"/>
</dbReference>
<dbReference type="Pfam" id="PF12804">
    <property type="entry name" value="NTP_transf_3"/>
    <property type="match status" value="1"/>
</dbReference>
<dbReference type="SUPFAM" id="SSF53448">
    <property type="entry name" value="Nucleotide-diphospho-sugar transferases"/>
    <property type="match status" value="1"/>
</dbReference>
<dbReference type="SUPFAM" id="SSF51161">
    <property type="entry name" value="Trimeric LpxA-like enzymes"/>
    <property type="match status" value="1"/>
</dbReference>
<dbReference type="PROSITE" id="PS00101">
    <property type="entry name" value="HEXAPEP_TRANSFERASES"/>
    <property type="match status" value="2"/>
</dbReference>
<proteinExistence type="inferred from homology"/>
<reference key="1">
    <citation type="journal article" date="2006" name="J. Bacteriol.">
        <title>Genome sequence of Aeromonas hydrophila ATCC 7966T: jack of all trades.</title>
        <authorList>
            <person name="Seshadri R."/>
            <person name="Joseph S.W."/>
            <person name="Chopra A.K."/>
            <person name="Sha J."/>
            <person name="Shaw J."/>
            <person name="Graf J."/>
            <person name="Haft D.H."/>
            <person name="Wu M."/>
            <person name="Ren Q."/>
            <person name="Rosovitz M.J."/>
            <person name="Madupu R."/>
            <person name="Tallon L."/>
            <person name="Kim M."/>
            <person name="Jin S."/>
            <person name="Vuong H."/>
            <person name="Stine O.C."/>
            <person name="Ali A."/>
            <person name="Horneman A.J."/>
            <person name="Heidelberg J.F."/>
        </authorList>
    </citation>
    <scope>NUCLEOTIDE SEQUENCE [LARGE SCALE GENOMIC DNA]</scope>
    <source>
        <strain>ATCC 7966 / DSM 30187 / BCRC 13018 / CCUG 14551 / JCM 1027 / KCTC 2358 / NCIMB 9240 / NCTC 8049</strain>
    </source>
</reference>
<keyword id="KW-0012">Acyltransferase</keyword>
<keyword id="KW-0133">Cell shape</keyword>
<keyword id="KW-0961">Cell wall biogenesis/degradation</keyword>
<keyword id="KW-0963">Cytoplasm</keyword>
<keyword id="KW-0460">Magnesium</keyword>
<keyword id="KW-0479">Metal-binding</keyword>
<keyword id="KW-0511">Multifunctional enzyme</keyword>
<keyword id="KW-0548">Nucleotidyltransferase</keyword>
<keyword id="KW-0573">Peptidoglycan synthesis</keyword>
<keyword id="KW-1185">Reference proteome</keyword>
<keyword id="KW-0677">Repeat</keyword>
<keyword id="KW-0808">Transferase</keyword>
<protein>
    <recommendedName>
        <fullName evidence="1">Bifunctional protein GlmU</fullName>
    </recommendedName>
    <domain>
        <recommendedName>
            <fullName evidence="1">UDP-N-acetylglucosamine pyrophosphorylase</fullName>
            <ecNumber evidence="1">2.7.7.23</ecNumber>
        </recommendedName>
        <alternativeName>
            <fullName evidence="1">N-acetylglucosamine-1-phosphate uridyltransferase</fullName>
        </alternativeName>
    </domain>
    <domain>
        <recommendedName>
            <fullName evidence="1">Glucosamine-1-phosphate N-acetyltransferase</fullName>
            <ecNumber evidence="1">2.3.1.157</ecNumber>
        </recommendedName>
    </domain>
</protein>
<sequence>MSLNVVILAAGKGTRMRSSLPKVLHPVANKPMVSHVIETARKVGAEQLHLVYGHGAELLKERIQASDLNWVLQAQQLGTGHAVAQAIPFWQDEDDVLVLYGDTPLIQPETLQRLLAAKASDGMALLTVVLDNPTGYGRIVRSNGQVVGIVEQKDANAEQLAIREVNTGVLVANGGQLRSWLSRLDNKNAQGEFYLTDVIAMAHADNCPIAAVHPDDAMEVEGANNRVQLAQLERSYQKMQAERLMIAGATLIDPARFDLRGTLEIGEEVVIDVNVIIEGKVVLGNHVRIGAGSVLKDCVIGDHSEVKPYSVIEGAQIADQCSVGPFTRLRPGTVLEQDAHVGNFVEMKKARLGVGSKCGHLTYLGDAEVGAKVNIGAGTITCNYDGVNKFQTIIEDDVFVGSDTQLVAPVRIGKGATLGAGSTITKDVAENELVITRVPQRHIQNWARPVKKK</sequence>
<gene>
    <name evidence="1" type="primary">glmU</name>
    <name type="ordered locus">AHA_4260</name>
</gene>
<comment type="function">
    <text evidence="1">Catalyzes the last two sequential reactions in the de novo biosynthetic pathway for UDP-N-acetylglucosamine (UDP-GlcNAc). The C-terminal domain catalyzes the transfer of acetyl group from acetyl coenzyme A to glucosamine-1-phosphate (GlcN-1-P) to produce N-acetylglucosamine-1-phosphate (GlcNAc-1-P), which is converted into UDP-GlcNAc by the transfer of uridine 5-monophosphate (from uridine 5-triphosphate), a reaction catalyzed by the N-terminal domain.</text>
</comment>
<comment type="catalytic activity">
    <reaction evidence="1">
        <text>alpha-D-glucosamine 1-phosphate + acetyl-CoA = N-acetyl-alpha-D-glucosamine 1-phosphate + CoA + H(+)</text>
        <dbReference type="Rhea" id="RHEA:13725"/>
        <dbReference type="ChEBI" id="CHEBI:15378"/>
        <dbReference type="ChEBI" id="CHEBI:57287"/>
        <dbReference type="ChEBI" id="CHEBI:57288"/>
        <dbReference type="ChEBI" id="CHEBI:57776"/>
        <dbReference type="ChEBI" id="CHEBI:58516"/>
        <dbReference type="EC" id="2.3.1.157"/>
    </reaction>
</comment>
<comment type="catalytic activity">
    <reaction evidence="1">
        <text>N-acetyl-alpha-D-glucosamine 1-phosphate + UTP + H(+) = UDP-N-acetyl-alpha-D-glucosamine + diphosphate</text>
        <dbReference type="Rhea" id="RHEA:13509"/>
        <dbReference type="ChEBI" id="CHEBI:15378"/>
        <dbReference type="ChEBI" id="CHEBI:33019"/>
        <dbReference type="ChEBI" id="CHEBI:46398"/>
        <dbReference type="ChEBI" id="CHEBI:57705"/>
        <dbReference type="ChEBI" id="CHEBI:57776"/>
        <dbReference type="EC" id="2.7.7.23"/>
    </reaction>
</comment>
<comment type="cofactor">
    <cofactor evidence="1">
        <name>Mg(2+)</name>
        <dbReference type="ChEBI" id="CHEBI:18420"/>
    </cofactor>
    <text evidence="1">Binds 1 Mg(2+) ion per subunit.</text>
</comment>
<comment type="pathway">
    <text evidence="1">Nucleotide-sugar biosynthesis; UDP-N-acetyl-alpha-D-glucosamine biosynthesis; N-acetyl-alpha-D-glucosamine 1-phosphate from alpha-D-glucosamine 6-phosphate (route II): step 2/2.</text>
</comment>
<comment type="pathway">
    <text evidence="1">Nucleotide-sugar biosynthesis; UDP-N-acetyl-alpha-D-glucosamine biosynthesis; UDP-N-acetyl-alpha-D-glucosamine from N-acetyl-alpha-D-glucosamine 1-phosphate: step 1/1.</text>
</comment>
<comment type="pathway">
    <text evidence="1">Bacterial outer membrane biogenesis; LPS lipid A biosynthesis.</text>
</comment>
<comment type="subunit">
    <text evidence="1">Homotrimer.</text>
</comment>
<comment type="subcellular location">
    <subcellularLocation>
        <location evidence="1">Cytoplasm</location>
    </subcellularLocation>
</comment>
<comment type="similarity">
    <text evidence="1">In the N-terminal section; belongs to the N-acetylglucosamine-1-phosphate uridyltransferase family.</text>
</comment>
<comment type="similarity">
    <text evidence="1">In the C-terminal section; belongs to the transferase hexapeptide repeat family.</text>
</comment>
<evidence type="ECO:0000255" key="1">
    <source>
        <dbReference type="HAMAP-Rule" id="MF_01631"/>
    </source>
</evidence>
<accession>A0KQX6</accession>
<name>GLMU_AERHH</name>
<organism>
    <name type="scientific">Aeromonas hydrophila subsp. hydrophila (strain ATCC 7966 / DSM 30187 / BCRC 13018 / CCUG 14551 / JCM 1027 / KCTC 2358 / NCIMB 9240 / NCTC 8049)</name>
    <dbReference type="NCBI Taxonomy" id="380703"/>
    <lineage>
        <taxon>Bacteria</taxon>
        <taxon>Pseudomonadati</taxon>
        <taxon>Pseudomonadota</taxon>
        <taxon>Gammaproteobacteria</taxon>
        <taxon>Aeromonadales</taxon>
        <taxon>Aeromonadaceae</taxon>
        <taxon>Aeromonas</taxon>
    </lineage>
</organism>
<feature type="chain" id="PRO_1000056135" description="Bifunctional protein GlmU">
    <location>
        <begin position="1"/>
        <end position="453"/>
    </location>
</feature>
<feature type="region of interest" description="Pyrophosphorylase" evidence="1">
    <location>
        <begin position="1"/>
        <end position="226"/>
    </location>
</feature>
<feature type="region of interest" description="Linker" evidence="1">
    <location>
        <begin position="227"/>
        <end position="247"/>
    </location>
</feature>
<feature type="region of interest" description="N-acetyltransferase" evidence="1">
    <location>
        <begin position="248"/>
        <end position="453"/>
    </location>
</feature>
<feature type="active site" description="Proton acceptor" evidence="1">
    <location>
        <position position="360"/>
    </location>
</feature>
<feature type="binding site" evidence="1">
    <location>
        <begin position="8"/>
        <end position="11"/>
    </location>
    <ligand>
        <name>UDP-N-acetyl-alpha-D-glucosamine</name>
        <dbReference type="ChEBI" id="CHEBI:57705"/>
    </ligand>
</feature>
<feature type="binding site" evidence="1">
    <location>
        <position position="22"/>
    </location>
    <ligand>
        <name>UDP-N-acetyl-alpha-D-glucosamine</name>
        <dbReference type="ChEBI" id="CHEBI:57705"/>
    </ligand>
</feature>
<feature type="binding site" evidence="1">
    <location>
        <position position="73"/>
    </location>
    <ligand>
        <name>UDP-N-acetyl-alpha-D-glucosamine</name>
        <dbReference type="ChEBI" id="CHEBI:57705"/>
    </ligand>
</feature>
<feature type="binding site" evidence="1">
    <location>
        <begin position="78"/>
        <end position="79"/>
    </location>
    <ligand>
        <name>UDP-N-acetyl-alpha-D-glucosamine</name>
        <dbReference type="ChEBI" id="CHEBI:57705"/>
    </ligand>
</feature>
<feature type="binding site" evidence="1">
    <location>
        <begin position="100"/>
        <end position="102"/>
    </location>
    <ligand>
        <name>UDP-N-acetyl-alpha-D-glucosamine</name>
        <dbReference type="ChEBI" id="CHEBI:57705"/>
    </ligand>
</feature>
<feature type="binding site" evidence="1">
    <location>
        <position position="102"/>
    </location>
    <ligand>
        <name>Mg(2+)</name>
        <dbReference type="ChEBI" id="CHEBI:18420"/>
    </ligand>
</feature>
<feature type="binding site" evidence="1">
    <location>
        <position position="137"/>
    </location>
    <ligand>
        <name>UDP-N-acetyl-alpha-D-glucosamine</name>
        <dbReference type="ChEBI" id="CHEBI:57705"/>
    </ligand>
</feature>
<feature type="binding site" evidence="1">
    <location>
        <position position="151"/>
    </location>
    <ligand>
        <name>UDP-N-acetyl-alpha-D-glucosamine</name>
        <dbReference type="ChEBI" id="CHEBI:57705"/>
    </ligand>
</feature>
<feature type="binding site" evidence="1">
    <location>
        <position position="166"/>
    </location>
    <ligand>
        <name>UDP-N-acetyl-alpha-D-glucosamine</name>
        <dbReference type="ChEBI" id="CHEBI:57705"/>
    </ligand>
</feature>
<feature type="binding site" evidence="1">
    <location>
        <position position="224"/>
    </location>
    <ligand>
        <name>Mg(2+)</name>
        <dbReference type="ChEBI" id="CHEBI:18420"/>
    </ligand>
</feature>
<feature type="binding site" evidence="1">
    <location>
        <position position="224"/>
    </location>
    <ligand>
        <name>UDP-N-acetyl-alpha-D-glucosamine</name>
        <dbReference type="ChEBI" id="CHEBI:57705"/>
    </ligand>
</feature>
<feature type="binding site" evidence="1">
    <location>
        <position position="330"/>
    </location>
    <ligand>
        <name>UDP-N-acetyl-alpha-D-glucosamine</name>
        <dbReference type="ChEBI" id="CHEBI:57705"/>
    </ligand>
</feature>
<feature type="binding site" evidence="1">
    <location>
        <position position="348"/>
    </location>
    <ligand>
        <name>UDP-N-acetyl-alpha-D-glucosamine</name>
        <dbReference type="ChEBI" id="CHEBI:57705"/>
    </ligand>
</feature>
<feature type="binding site" evidence="1">
    <location>
        <position position="363"/>
    </location>
    <ligand>
        <name>UDP-N-acetyl-alpha-D-glucosamine</name>
        <dbReference type="ChEBI" id="CHEBI:57705"/>
    </ligand>
</feature>
<feature type="binding site" evidence="1">
    <location>
        <position position="374"/>
    </location>
    <ligand>
        <name>UDP-N-acetyl-alpha-D-glucosamine</name>
        <dbReference type="ChEBI" id="CHEBI:57705"/>
    </ligand>
</feature>
<feature type="binding site" evidence="1">
    <location>
        <position position="377"/>
    </location>
    <ligand>
        <name>acetyl-CoA</name>
        <dbReference type="ChEBI" id="CHEBI:57288"/>
    </ligand>
</feature>
<feature type="binding site" evidence="1">
    <location>
        <begin position="383"/>
        <end position="384"/>
    </location>
    <ligand>
        <name>acetyl-CoA</name>
        <dbReference type="ChEBI" id="CHEBI:57288"/>
    </ligand>
</feature>
<feature type="binding site" evidence="1">
    <location>
        <position position="402"/>
    </location>
    <ligand>
        <name>acetyl-CoA</name>
        <dbReference type="ChEBI" id="CHEBI:57288"/>
    </ligand>
</feature>
<feature type="binding site" evidence="1">
    <location>
        <position position="420"/>
    </location>
    <ligand>
        <name>acetyl-CoA</name>
        <dbReference type="ChEBI" id="CHEBI:57288"/>
    </ligand>
</feature>
<feature type="binding site" evidence="1">
    <location>
        <position position="437"/>
    </location>
    <ligand>
        <name>acetyl-CoA</name>
        <dbReference type="ChEBI" id="CHEBI:57288"/>
    </ligand>
</feature>